<feature type="chain" id="PRO_0000318964" description="Leucine-rich repeat-containing protein 74B">
    <location>
        <begin position="1"/>
        <end position="392"/>
    </location>
</feature>
<feature type="repeat" description="LRR 1">
    <location>
        <begin position="106"/>
        <end position="129"/>
    </location>
</feature>
<feature type="repeat" description="LRR 2">
    <location>
        <begin position="134"/>
        <end position="157"/>
    </location>
</feature>
<feature type="repeat" description="LRR 3">
    <location>
        <begin position="162"/>
        <end position="185"/>
    </location>
</feature>
<feature type="repeat" description="LRR 4">
    <location>
        <begin position="192"/>
        <end position="213"/>
    </location>
</feature>
<feature type="repeat" description="LRR 5">
    <location>
        <begin position="220"/>
        <end position="241"/>
    </location>
</feature>
<feature type="repeat" description="LRR 6">
    <location>
        <begin position="248"/>
        <end position="269"/>
    </location>
</feature>
<feature type="repeat" description="LRR 7">
    <location>
        <begin position="276"/>
        <end position="297"/>
    </location>
</feature>
<feature type="repeat" description="LRR 8">
    <location>
        <begin position="304"/>
        <end position="325"/>
    </location>
</feature>
<feature type="repeat" description="LRR 9">
    <location>
        <begin position="334"/>
        <end position="356"/>
    </location>
</feature>
<feature type="region of interest" description="Disordered" evidence="1">
    <location>
        <begin position="24"/>
        <end position="46"/>
    </location>
</feature>
<feature type="splice variant" id="VSP_031321" description="In isoform 2." evidence="2 3">
    <original>DVDLSENQLGVAGAQALCAALTVNQAMRKMQLSGNGLEEQAAQHLAELLLAHTDLKSLDLSYNQLNDQAGETLGPALAENTGLTELNVSWNHLRGPGAVAFARGLEANIFLKVLDISYNGFGDPGASAVGEALKANNVLEELNMSNNRISAMGALSLGLGLRVNQTLRILVVSRNPMRSEGCFGLLKSVQDNPASALELLDFSDIQVNAEFDGLASSVRGILPELCIKTGACRVEYKKELLPVFRSALPASVPK</original>
    <variation>GRCWVWGRWAGVSSFSSGMCLHR</variation>
    <location>
        <begin position="139"/>
        <end position="392"/>
    </location>
</feature>
<feature type="sequence variant" id="VAR_038923" description="In dbSNP:rs12170538.">
    <original>G</original>
    <variation>R</variation>
    <location>
        <position position="3"/>
    </location>
</feature>
<feature type="sequence variant" id="VAR_038924" description="In dbSNP:rs9620774.">
    <original>R</original>
    <variation>C</variation>
    <location>
        <position position="77"/>
    </location>
</feature>
<gene>
    <name evidence="4" type="primary">LRRC74B</name>
</gene>
<dbReference type="EMBL" id="AK128646">
    <property type="protein sequence ID" value="BAC87547.1"/>
    <property type="molecule type" value="mRNA"/>
</dbReference>
<dbReference type="EMBL" id="AC002472">
    <property type="status" value="NOT_ANNOTATED_CDS"/>
    <property type="molecule type" value="Genomic_DNA"/>
</dbReference>
<dbReference type="EMBL" id="BC028231">
    <property type="status" value="NOT_ANNOTATED_CDS"/>
    <property type="molecule type" value="mRNA"/>
</dbReference>
<dbReference type="CCDS" id="CCDS77654.1">
    <molecule id="Q6ZQY2-1"/>
</dbReference>
<dbReference type="RefSeq" id="NP_001277935.1">
    <molecule id="Q6ZQY2-1"/>
    <property type="nucleotide sequence ID" value="NM_001291006.2"/>
</dbReference>
<dbReference type="SMR" id="Q6ZQY2"/>
<dbReference type="FunCoup" id="Q6ZQY2">
    <property type="interactions" value="13"/>
</dbReference>
<dbReference type="STRING" id="9606.ENSP00000394078"/>
<dbReference type="GlyCosmos" id="Q6ZQY2">
    <property type="glycosylation" value="1 site, 1 glycan"/>
</dbReference>
<dbReference type="GlyGen" id="Q6ZQY2">
    <property type="glycosylation" value="1 site, 1 O-linked glycan (1 site)"/>
</dbReference>
<dbReference type="iPTMnet" id="Q6ZQY2"/>
<dbReference type="PhosphoSitePlus" id="Q6ZQY2"/>
<dbReference type="BioMuta" id="LRRC74B"/>
<dbReference type="MassIVE" id="Q6ZQY2"/>
<dbReference type="PaxDb" id="9606-ENSP00000394078"/>
<dbReference type="PeptideAtlas" id="Q6ZQY2"/>
<dbReference type="Antibodypedia" id="62520">
    <property type="antibodies" value="24 antibodies from 8 providers"/>
</dbReference>
<dbReference type="DNASU" id="400891"/>
<dbReference type="Ensembl" id="ENST00000442047.3">
    <molecule id="Q6ZQY2-1"/>
    <property type="protein sequence ID" value="ENSP00000394078.2"/>
    <property type="gene ID" value="ENSG00000187905.11"/>
</dbReference>
<dbReference type="GeneID" id="400891"/>
<dbReference type="KEGG" id="hsa:400891"/>
<dbReference type="MANE-Select" id="ENST00000442047.3">
    <property type="protein sequence ID" value="ENSP00000394078.2"/>
    <property type="RefSeq nucleotide sequence ID" value="NM_001291006.2"/>
    <property type="RefSeq protein sequence ID" value="NP_001277935.1"/>
</dbReference>
<dbReference type="UCSC" id="uc062bxn.1">
    <molecule id="Q6ZQY2-1"/>
    <property type="organism name" value="human"/>
</dbReference>
<dbReference type="AGR" id="HGNC:34301"/>
<dbReference type="CTD" id="400891"/>
<dbReference type="GeneCards" id="LRRC74B"/>
<dbReference type="HGNC" id="HGNC:34301">
    <property type="gene designation" value="LRRC74B"/>
</dbReference>
<dbReference type="HPA" id="ENSG00000187905">
    <property type="expression patterns" value="Tissue enhanced (choroid plexus, fallopian tube)"/>
</dbReference>
<dbReference type="neXtProt" id="NX_Q6ZQY2"/>
<dbReference type="OpenTargets" id="ENSG00000187905"/>
<dbReference type="VEuPathDB" id="HostDB:ENSG00000187905"/>
<dbReference type="eggNOG" id="KOG4308">
    <property type="taxonomic scope" value="Eukaryota"/>
</dbReference>
<dbReference type="GeneTree" id="ENSGT00940000154297"/>
<dbReference type="HOGENOM" id="CLU_017147_0_0_1"/>
<dbReference type="InParanoid" id="Q6ZQY2"/>
<dbReference type="OMA" id="QGPEANW"/>
<dbReference type="OrthoDB" id="76105at2759"/>
<dbReference type="PAN-GO" id="Q6ZQY2">
    <property type="GO annotations" value="0 GO annotations based on evolutionary models"/>
</dbReference>
<dbReference type="PathwayCommons" id="Q6ZQY2"/>
<dbReference type="SignaLink" id="Q6ZQY2"/>
<dbReference type="BioGRID-ORCS" id="400891">
    <property type="hits" value="2 hits in 145 CRISPR screens"/>
</dbReference>
<dbReference type="GenomeRNAi" id="400891"/>
<dbReference type="Pharos" id="Q6ZQY2">
    <property type="development level" value="Tdark"/>
</dbReference>
<dbReference type="PRO" id="PR:Q6ZQY2"/>
<dbReference type="Proteomes" id="UP000005640">
    <property type="component" value="Chromosome 22"/>
</dbReference>
<dbReference type="RNAct" id="Q6ZQY2">
    <property type="molecule type" value="protein"/>
</dbReference>
<dbReference type="Bgee" id="ENSG00000187905">
    <property type="expression patterns" value="Expressed in right uterine tube and 57 other cell types or tissues"/>
</dbReference>
<dbReference type="Gene3D" id="3.80.10.10">
    <property type="entry name" value="Ribonuclease Inhibitor"/>
    <property type="match status" value="1"/>
</dbReference>
<dbReference type="InterPro" id="IPR001611">
    <property type="entry name" value="Leu-rich_rpt"/>
</dbReference>
<dbReference type="InterPro" id="IPR052394">
    <property type="entry name" value="LRR-containing"/>
</dbReference>
<dbReference type="InterPro" id="IPR032675">
    <property type="entry name" value="LRR_dom_sf"/>
</dbReference>
<dbReference type="PANTHER" id="PTHR24114">
    <property type="entry name" value="LEUCINE RICH REPEAT FAMILY PROTEIN"/>
    <property type="match status" value="1"/>
</dbReference>
<dbReference type="PANTHER" id="PTHR24114:SF37">
    <property type="entry name" value="LEUCINE-RICH REPEAT-CONTAINING PROTEIN 74B"/>
    <property type="match status" value="1"/>
</dbReference>
<dbReference type="Pfam" id="PF13516">
    <property type="entry name" value="LRR_6"/>
    <property type="match status" value="7"/>
</dbReference>
<dbReference type="SMART" id="SM00368">
    <property type="entry name" value="LRR_RI"/>
    <property type="match status" value="9"/>
</dbReference>
<dbReference type="SUPFAM" id="SSF52047">
    <property type="entry name" value="RNI-like"/>
    <property type="match status" value="1"/>
</dbReference>
<name>LR74B_HUMAN</name>
<protein>
    <recommendedName>
        <fullName evidence="4">Leucine-rich repeat-containing protein 74B</fullName>
    </recommendedName>
</protein>
<organism>
    <name type="scientific">Homo sapiens</name>
    <name type="common">Human</name>
    <dbReference type="NCBI Taxonomy" id="9606"/>
    <lineage>
        <taxon>Eukaryota</taxon>
        <taxon>Metazoa</taxon>
        <taxon>Chordata</taxon>
        <taxon>Craniata</taxon>
        <taxon>Vertebrata</taxon>
        <taxon>Euteleostomi</taxon>
        <taxon>Mammalia</taxon>
        <taxon>Eutheria</taxon>
        <taxon>Euarchontoglires</taxon>
        <taxon>Primates</taxon>
        <taxon>Haplorrhini</taxon>
        <taxon>Catarrhini</taxon>
        <taxon>Hominidae</taxon>
        <taxon>Homo</taxon>
    </lineage>
</organism>
<comment type="alternative products">
    <event type="alternative splicing"/>
    <isoform>
        <id>Q6ZQY2-1</id>
        <name>1</name>
        <sequence type="displayed"/>
    </isoform>
    <isoform>
        <id>Q6ZQY2-2</id>
        <name>2</name>
        <sequence type="described" ref="VSP_031321"/>
    </isoform>
</comment>
<keyword id="KW-0025">Alternative splicing</keyword>
<keyword id="KW-0433">Leucine-rich repeat</keyword>
<keyword id="KW-1267">Proteomics identification</keyword>
<keyword id="KW-1185">Reference proteome</keyword>
<keyword id="KW-0677">Repeat</keyword>
<proteinExistence type="evidence at protein level"/>
<sequence length="392" mass="41621">MRGSCERSGEDEEQKEEAMVACGRLSGVPEAEQGPEANWDSDLETEGTDGLGELVRDTLYLRSCRAHSVVPISCFLRQGSAQELNLRHRGLGPQGARALASSLSSNPYVKRLDLRDNGLCGAGAEALAGALSKSSSIHDVDLSENQLGVAGAQALCAALTVNQAMRKMQLSGNGLEEQAAQHLAELLLAHTDLKSLDLSYNQLNDQAGETLGPALAENTGLTELNVSWNHLRGPGAVAFARGLEANIFLKVLDISYNGFGDPGASAVGEALKANNVLEELNMSNNRISAMGALSLGLGLRVNQTLRILVVSRNPMRSEGCFGLLKSVQDNPASALELLDFSDIQVNAEFDGLASSVRGILPELCIKTGACRVEYKKELLPVFRSALPASVPK</sequence>
<reference key="1">
    <citation type="journal article" date="2004" name="Nat. Genet.">
        <title>Complete sequencing and characterization of 21,243 full-length human cDNAs.</title>
        <authorList>
            <person name="Ota T."/>
            <person name="Suzuki Y."/>
            <person name="Nishikawa T."/>
            <person name="Otsuki T."/>
            <person name="Sugiyama T."/>
            <person name="Irie R."/>
            <person name="Wakamatsu A."/>
            <person name="Hayashi K."/>
            <person name="Sato H."/>
            <person name="Nagai K."/>
            <person name="Kimura K."/>
            <person name="Makita H."/>
            <person name="Sekine M."/>
            <person name="Obayashi M."/>
            <person name="Nishi T."/>
            <person name="Shibahara T."/>
            <person name="Tanaka T."/>
            <person name="Ishii S."/>
            <person name="Yamamoto J."/>
            <person name="Saito K."/>
            <person name="Kawai Y."/>
            <person name="Isono Y."/>
            <person name="Nakamura Y."/>
            <person name="Nagahari K."/>
            <person name="Murakami K."/>
            <person name="Yasuda T."/>
            <person name="Iwayanagi T."/>
            <person name="Wagatsuma M."/>
            <person name="Shiratori A."/>
            <person name="Sudo H."/>
            <person name="Hosoiri T."/>
            <person name="Kaku Y."/>
            <person name="Kodaira H."/>
            <person name="Kondo H."/>
            <person name="Sugawara M."/>
            <person name="Takahashi M."/>
            <person name="Kanda K."/>
            <person name="Yokoi T."/>
            <person name="Furuya T."/>
            <person name="Kikkawa E."/>
            <person name="Omura Y."/>
            <person name="Abe K."/>
            <person name="Kamihara K."/>
            <person name="Katsuta N."/>
            <person name="Sato K."/>
            <person name="Tanikawa M."/>
            <person name="Yamazaki M."/>
            <person name="Ninomiya K."/>
            <person name="Ishibashi T."/>
            <person name="Yamashita H."/>
            <person name="Murakawa K."/>
            <person name="Fujimori K."/>
            <person name="Tanai H."/>
            <person name="Kimata M."/>
            <person name="Watanabe M."/>
            <person name="Hiraoka S."/>
            <person name="Chiba Y."/>
            <person name="Ishida S."/>
            <person name="Ono Y."/>
            <person name="Takiguchi S."/>
            <person name="Watanabe S."/>
            <person name="Yosida M."/>
            <person name="Hotuta T."/>
            <person name="Kusano J."/>
            <person name="Kanehori K."/>
            <person name="Takahashi-Fujii A."/>
            <person name="Hara H."/>
            <person name="Tanase T.-O."/>
            <person name="Nomura Y."/>
            <person name="Togiya S."/>
            <person name="Komai F."/>
            <person name="Hara R."/>
            <person name="Takeuchi K."/>
            <person name="Arita M."/>
            <person name="Imose N."/>
            <person name="Musashino K."/>
            <person name="Yuuki H."/>
            <person name="Oshima A."/>
            <person name="Sasaki N."/>
            <person name="Aotsuka S."/>
            <person name="Yoshikawa Y."/>
            <person name="Matsunawa H."/>
            <person name="Ichihara T."/>
            <person name="Shiohata N."/>
            <person name="Sano S."/>
            <person name="Moriya S."/>
            <person name="Momiyama H."/>
            <person name="Satoh N."/>
            <person name="Takami S."/>
            <person name="Terashima Y."/>
            <person name="Suzuki O."/>
            <person name="Nakagawa S."/>
            <person name="Senoh A."/>
            <person name="Mizoguchi H."/>
            <person name="Goto Y."/>
            <person name="Shimizu F."/>
            <person name="Wakebe H."/>
            <person name="Hishigaki H."/>
            <person name="Watanabe T."/>
            <person name="Sugiyama A."/>
            <person name="Takemoto M."/>
            <person name="Kawakami B."/>
            <person name="Yamazaki M."/>
            <person name="Watanabe K."/>
            <person name="Kumagai A."/>
            <person name="Itakura S."/>
            <person name="Fukuzumi Y."/>
            <person name="Fujimori Y."/>
            <person name="Komiyama M."/>
            <person name="Tashiro H."/>
            <person name="Tanigami A."/>
            <person name="Fujiwara T."/>
            <person name="Ono T."/>
            <person name="Yamada K."/>
            <person name="Fujii Y."/>
            <person name="Ozaki K."/>
            <person name="Hirao M."/>
            <person name="Ohmori Y."/>
            <person name="Kawabata A."/>
            <person name="Hikiji T."/>
            <person name="Kobatake N."/>
            <person name="Inagaki H."/>
            <person name="Ikema Y."/>
            <person name="Okamoto S."/>
            <person name="Okitani R."/>
            <person name="Kawakami T."/>
            <person name="Noguchi S."/>
            <person name="Itoh T."/>
            <person name="Shigeta K."/>
            <person name="Senba T."/>
            <person name="Matsumura K."/>
            <person name="Nakajima Y."/>
            <person name="Mizuno T."/>
            <person name="Morinaga M."/>
            <person name="Sasaki M."/>
            <person name="Togashi T."/>
            <person name="Oyama M."/>
            <person name="Hata H."/>
            <person name="Watanabe M."/>
            <person name="Komatsu T."/>
            <person name="Mizushima-Sugano J."/>
            <person name="Satoh T."/>
            <person name="Shirai Y."/>
            <person name="Takahashi Y."/>
            <person name="Nakagawa K."/>
            <person name="Okumura K."/>
            <person name="Nagase T."/>
            <person name="Nomura N."/>
            <person name="Kikuchi H."/>
            <person name="Masuho Y."/>
            <person name="Yamashita R."/>
            <person name="Nakai K."/>
            <person name="Yada T."/>
            <person name="Nakamura Y."/>
            <person name="Ohara O."/>
            <person name="Isogai T."/>
            <person name="Sugano S."/>
        </authorList>
    </citation>
    <scope>NUCLEOTIDE SEQUENCE [LARGE SCALE MRNA] (ISOFORM 2)</scope>
    <source>
        <tissue>Trachea</tissue>
    </source>
</reference>
<reference key="2">
    <citation type="journal article" date="1999" name="Nature">
        <title>The DNA sequence of human chromosome 22.</title>
        <authorList>
            <person name="Dunham I."/>
            <person name="Hunt A.R."/>
            <person name="Collins J.E."/>
            <person name="Bruskiewich R."/>
            <person name="Beare D.M."/>
            <person name="Clamp M."/>
            <person name="Smink L.J."/>
            <person name="Ainscough R."/>
            <person name="Almeida J.P."/>
            <person name="Babbage A.K."/>
            <person name="Bagguley C."/>
            <person name="Bailey J."/>
            <person name="Barlow K.F."/>
            <person name="Bates K.N."/>
            <person name="Beasley O.P."/>
            <person name="Bird C.P."/>
            <person name="Blakey S.E."/>
            <person name="Bridgeman A.M."/>
            <person name="Buck D."/>
            <person name="Burgess J."/>
            <person name="Burrill W.D."/>
            <person name="Burton J."/>
            <person name="Carder C."/>
            <person name="Carter N.P."/>
            <person name="Chen Y."/>
            <person name="Clark G."/>
            <person name="Clegg S.M."/>
            <person name="Cobley V.E."/>
            <person name="Cole C.G."/>
            <person name="Collier R.E."/>
            <person name="Connor R."/>
            <person name="Conroy D."/>
            <person name="Corby N.R."/>
            <person name="Coville G.J."/>
            <person name="Cox A.V."/>
            <person name="Davis J."/>
            <person name="Dawson E."/>
            <person name="Dhami P.D."/>
            <person name="Dockree C."/>
            <person name="Dodsworth S.J."/>
            <person name="Durbin R.M."/>
            <person name="Ellington A.G."/>
            <person name="Evans K.L."/>
            <person name="Fey J.M."/>
            <person name="Fleming K."/>
            <person name="French L."/>
            <person name="Garner A.A."/>
            <person name="Gilbert J.G.R."/>
            <person name="Goward M.E."/>
            <person name="Grafham D.V."/>
            <person name="Griffiths M.N.D."/>
            <person name="Hall C."/>
            <person name="Hall R.E."/>
            <person name="Hall-Tamlyn G."/>
            <person name="Heathcott R.W."/>
            <person name="Ho S."/>
            <person name="Holmes S."/>
            <person name="Hunt S.E."/>
            <person name="Jones M.C."/>
            <person name="Kershaw J."/>
            <person name="Kimberley A.M."/>
            <person name="King A."/>
            <person name="Laird G.K."/>
            <person name="Langford C.F."/>
            <person name="Leversha M.A."/>
            <person name="Lloyd C."/>
            <person name="Lloyd D.M."/>
            <person name="Martyn I.D."/>
            <person name="Mashreghi-Mohammadi M."/>
            <person name="Matthews L.H."/>
            <person name="Mccann O.T."/>
            <person name="Mcclay J."/>
            <person name="Mclaren S."/>
            <person name="McMurray A.A."/>
            <person name="Milne S.A."/>
            <person name="Mortimore B.J."/>
            <person name="Odell C.N."/>
            <person name="Pavitt R."/>
            <person name="Pearce A.V."/>
            <person name="Pearson D."/>
            <person name="Phillimore B.J.C.T."/>
            <person name="Phillips S.H."/>
            <person name="Plumb R.W."/>
            <person name="Ramsay H."/>
            <person name="Ramsey Y."/>
            <person name="Rogers L."/>
            <person name="Ross M.T."/>
            <person name="Scott C.E."/>
            <person name="Sehra H.K."/>
            <person name="Skuce C.D."/>
            <person name="Smalley S."/>
            <person name="Smith M.L."/>
            <person name="Soderlund C."/>
            <person name="Spragon L."/>
            <person name="Steward C.A."/>
            <person name="Sulston J.E."/>
            <person name="Swann R.M."/>
            <person name="Vaudin M."/>
            <person name="Wall M."/>
            <person name="Wallis J.M."/>
            <person name="Whiteley M.N."/>
            <person name="Willey D.L."/>
            <person name="Williams L."/>
            <person name="Williams S.A."/>
            <person name="Williamson H."/>
            <person name="Wilmer T.E."/>
            <person name="Wilming L."/>
            <person name="Wright C.L."/>
            <person name="Hubbard T."/>
            <person name="Bentley D.R."/>
            <person name="Beck S."/>
            <person name="Rogers J."/>
            <person name="Shimizu N."/>
            <person name="Minoshima S."/>
            <person name="Kawasaki K."/>
            <person name="Sasaki T."/>
            <person name="Asakawa S."/>
            <person name="Kudoh J."/>
            <person name="Shintani A."/>
            <person name="Shibuya K."/>
            <person name="Yoshizaki Y."/>
            <person name="Aoki N."/>
            <person name="Mitsuyama S."/>
            <person name="Roe B.A."/>
            <person name="Chen F."/>
            <person name="Chu L."/>
            <person name="Crabtree J."/>
            <person name="Deschamps S."/>
            <person name="Do A."/>
            <person name="Do T."/>
            <person name="Dorman A."/>
            <person name="Fang F."/>
            <person name="Fu Y."/>
            <person name="Hu P."/>
            <person name="Hua A."/>
            <person name="Kenton S."/>
            <person name="Lai H."/>
            <person name="Lao H.I."/>
            <person name="Lewis J."/>
            <person name="Lewis S."/>
            <person name="Lin S.-P."/>
            <person name="Loh P."/>
            <person name="Malaj E."/>
            <person name="Nguyen T."/>
            <person name="Pan H."/>
            <person name="Phan S."/>
            <person name="Qi S."/>
            <person name="Qian Y."/>
            <person name="Ray L."/>
            <person name="Ren Q."/>
            <person name="Shaull S."/>
            <person name="Sloan D."/>
            <person name="Song L."/>
            <person name="Wang Q."/>
            <person name="Wang Y."/>
            <person name="Wang Z."/>
            <person name="White J."/>
            <person name="Willingham D."/>
            <person name="Wu H."/>
            <person name="Yao Z."/>
            <person name="Zhan M."/>
            <person name="Zhang G."/>
            <person name="Chissoe S."/>
            <person name="Murray J."/>
            <person name="Miller N."/>
            <person name="Minx P."/>
            <person name="Fulton R."/>
            <person name="Johnson D."/>
            <person name="Bemis G."/>
            <person name="Bentley D."/>
            <person name="Bradshaw H."/>
            <person name="Bourne S."/>
            <person name="Cordes M."/>
            <person name="Du Z."/>
            <person name="Fulton L."/>
            <person name="Goela D."/>
            <person name="Graves T."/>
            <person name="Hawkins J."/>
            <person name="Hinds K."/>
            <person name="Kemp K."/>
            <person name="Latreille P."/>
            <person name="Layman D."/>
            <person name="Ozersky P."/>
            <person name="Rohlfing T."/>
            <person name="Scheet P."/>
            <person name="Walker C."/>
            <person name="Wamsley A."/>
            <person name="Wohldmann P."/>
            <person name="Pepin K."/>
            <person name="Nelson J."/>
            <person name="Korf I."/>
            <person name="Bedell J.A."/>
            <person name="Hillier L.W."/>
            <person name="Mardis E."/>
            <person name="Waterston R."/>
            <person name="Wilson R."/>
            <person name="Emanuel B.S."/>
            <person name="Shaikh T."/>
            <person name="Kurahashi H."/>
            <person name="Saitta S."/>
            <person name="Budarf M.L."/>
            <person name="McDermid H.E."/>
            <person name="Johnson A."/>
            <person name="Wong A.C.C."/>
            <person name="Morrow B.E."/>
            <person name="Edelmann L."/>
            <person name="Kim U.J."/>
            <person name="Shizuya H."/>
            <person name="Simon M.I."/>
            <person name="Dumanski J.P."/>
            <person name="Peyrard M."/>
            <person name="Kedra D."/>
            <person name="Seroussi E."/>
            <person name="Fransson I."/>
            <person name="Tapia I."/>
            <person name="Bruder C.E."/>
            <person name="O'Brien K.P."/>
            <person name="Wilkinson P."/>
            <person name="Bodenteich A."/>
            <person name="Hartman K."/>
            <person name="Hu X."/>
            <person name="Khan A.S."/>
            <person name="Lane L."/>
            <person name="Tilahun Y."/>
            <person name="Wright H."/>
        </authorList>
    </citation>
    <scope>NUCLEOTIDE SEQUENCE [LARGE SCALE GENOMIC DNA]</scope>
</reference>
<reference key="3">
    <citation type="journal article" date="2004" name="Genome Res.">
        <title>The status, quality, and expansion of the NIH full-length cDNA project: the Mammalian Gene Collection (MGC).</title>
        <authorList>
            <consortium name="The MGC Project Team"/>
        </authorList>
    </citation>
    <scope>NUCLEOTIDE SEQUENCE [LARGE SCALE MRNA] (ISOFORM 2)</scope>
    <source>
        <tissue>Fetal brain</tissue>
    </source>
</reference>
<evidence type="ECO:0000256" key="1">
    <source>
        <dbReference type="SAM" id="MobiDB-lite"/>
    </source>
</evidence>
<evidence type="ECO:0000303" key="2">
    <source>
    </source>
</evidence>
<evidence type="ECO:0000303" key="3">
    <source>
    </source>
</evidence>
<evidence type="ECO:0000312" key="4">
    <source>
        <dbReference type="HGNC" id="HGNC:34301"/>
    </source>
</evidence>
<accession>Q6ZQY2</accession>